<protein>
    <recommendedName>
        <fullName evidence="1">4-hydroxy-3-methylbut-2-en-1-yl diphosphate synthase (flavodoxin)</fullName>
        <ecNumber evidence="1">1.17.7.3</ecNumber>
    </recommendedName>
    <alternativeName>
        <fullName evidence="1">1-hydroxy-2-methyl-2-(E)-butenyl 4-diphosphate synthase</fullName>
    </alternativeName>
</protein>
<comment type="function">
    <text evidence="1">Converts 2C-methyl-D-erythritol 2,4-cyclodiphosphate (ME-2,4cPP) into 1-hydroxy-2-methyl-2-(E)-butenyl 4-diphosphate.</text>
</comment>
<comment type="catalytic activity">
    <reaction evidence="1">
        <text>(2E)-4-hydroxy-3-methylbut-2-enyl diphosphate + oxidized [flavodoxin] + H2O + 2 H(+) = 2-C-methyl-D-erythritol 2,4-cyclic diphosphate + reduced [flavodoxin]</text>
        <dbReference type="Rhea" id="RHEA:43604"/>
        <dbReference type="Rhea" id="RHEA-COMP:10622"/>
        <dbReference type="Rhea" id="RHEA-COMP:10623"/>
        <dbReference type="ChEBI" id="CHEBI:15377"/>
        <dbReference type="ChEBI" id="CHEBI:15378"/>
        <dbReference type="ChEBI" id="CHEBI:57618"/>
        <dbReference type="ChEBI" id="CHEBI:58210"/>
        <dbReference type="ChEBI" id="CHEBI:58483"/>
        <dbReference type="ChEBI" id="CHEBI:128753"/>
        <dbReference type="EC" id="1.17.7.3"/>
    </reaction>
</comment>
<comment type="cofactor">
    <cofactor evidence="1">
        <name>[4Fe-4S] cluster</name>
        <dbReference type="ChEBI" id="CHEBI:49883"/>
    </cofactor>
    <text evidence="1">Binds 1 [4Fe-4S] cluster.</text>
</comment>
<comment type="pathway">
    <text evidence="1">Isoprenoid biosynthesis; isopentenyl diphosphate biosynthesis via DXP pathway; isopentenyl diphosphate from 1-deoxy-D-xylulose 5-phosphate: step 5/6.</text>
</comment>
<comment type="similarity">
    <text evidence="1">Belongs to the IspG family.</text>
</comment>
<evidence type="ECO:0000255" key="1">
    <source>
        <dbReference type="HAMAP-Rule" id="MF_00159"/>
    </source>
</evidence>
<proteinExistence type="inferred from homology"/>
<feature type="chain" id="PRO_1000011478" description="4-hydroxy-3-methylbut-2-en-1-yl diphosphate synthase (flavodoxin)">
    <location>
        <begin position="1"/>
        <end position="359"/>
    </location>
</feature>
<feature type="binding site" evidence="1">
    <location>
        <position position="265"/>
    </location>
    <ligand>
        <name>[4Fe-4S] cluster</name>
        <dbReference type="ChEBI" id="CHEBI:49883"/>
    </ligand>
</feature>
<feature type="binding site" evidence="1">
    <location>
        <position position="268"/>
    </location>
    <ligand>
        <name>[4Fe-4S] cluster</name>
        <dbReference type="ChEBI" id="CHEBI:49883"/>
    </ligand>
</feature>
<feature type="binding site" evidence="1">
    <location>
        <position position="300"/>
    </location>
    <ligand>
        <name>[4Fe-4S] cluster</name>
        <dbReference type="ChEBI" id="CHEBI:49883"/>
    </ligand>
</feature>
<feature type="binding site" evidence="1">
    <location>
        <position position="307"/>
    </location>
    <ligand>
        <name>[4Fe-4S] cluster</name>
        <dbReference type="ChEBI" id="CHEBI:49883"/>
    </ligand>
</feature>
<dbReference type="EC" id="1.17.7.3" evidence="1"/>
<dbReference type="EMBL" id="AM180252">
    <property type="protein sequence ID" value="CAJ54080.1"/>
    <property type="molecule type" value="Genomic_DNA"/>
</dbReference>
<dbReference type="RefSeq" id="WP_011526107.1">
    <property type="nucleotide sequence ID" value="NC_008011.1"/>
</dbReference>
<dbReference type="SMR" id="Q1MSE5"/>
<dbReference type="STRING" id="363253.LI0024"/>
<dbReference type="KEGG" id="lip:LI0024"/>
<dbReference type="eggNOG" id="COG0821">
    <property type="taxonomic scope" value="Bacteria"/>
</dbReference>
<dbReference type="HOGENOM" id="CLU_042258_0_0_7"/>
<dbReference type="OrthoDB" id="9803214at2"/>
<dbReference type="UniPathway" id="UPA00056">
    <property type="reaction ID" value="UER00096"/>
</dbReference>
<dbReference type="Proteomes" id="UP000002430">
    <property type="component" value="Chromosome"/>
</dbReference>
<dbReference type="GO" id="GO:0051539">
    <property type="term" value="F:4 iron, 4 sulfur cluster binding"/>
    <property type="evidence" value="ECO:0007669"/>
    <property type="project" value="UniProtKB-UniRule"/>
</dbReference>
<dbReference type="GO" id="GO:0046429">
    <property type="term" value="F:4-hydroxy-3-methylbut-2-en-1-yl diphosphate synthase activity (ferredoxin)"/>
    <property type="evidence" value="ECO:0007669"/>
    <property type="project" value="UniProtKB-UniRule"/>
</dbReference>
<dbReference type="GO" id="GO:0141197">
    <property type="term" value="F:4-hydroxy-3-methylbut-2-enyl-diphosphate synthase activity (flavodoxin)"/>
    <property type="evidence" value="ECO:0007669"/>
    <property type="project" value="UniProtKB-EC"/>
</dbReference>
<dbReference type="GO" id="GO:0005506">
    <property type="term" value="F:iron ion binding"/>
    <property type="evidence" value="ECO:0007669"/>
    <property type="project" value="InterPro"/>
</dbReference>
<dbReference type="GO" id="GO:0019288">
    <property type="term" value="P:isopentenyl diphosphate biosynthetic process, methylerythritol 4-phosphate pathway"/>
    <property type="evidence" value="ECO:0007669"/>
    <property type="project" value="UniProtKB-UniRule"/>
</dbReference>
<dbReference type="GO" id="GO:0016114">
    <property type="term" value="P:terpenoid biosynthetic process"/>
    <property type="evidence" value="ECO:0007669"/>
    <property type="project" value="InterPro"/>
</dbReference>
<dbReference type="FunFam" id="3.20.20.20:FF:000001">
    <property type="entry name" value="4-hydroxy-3-methylbut-2-en-1-yl diphosphate synthase (flavodoxin)"/>
    <property type="match status" value="1"/>
</dbReference>
<dbReference type="Gene3D" id="3.20.20.20">
    <property type="entry name" value="Dihydropteroate synthase-like"/>
    <property type="match status" value="1"/>
</dbReference>
<dbReference type="Gene3D" id="3.30.413.10">
    <property type="entry name" value="Sulfite Reductase Hemoprotein, domain 1"/>
    <property type="match status" value="1"/>
</dbReference>
<dbReference type="HAMAP" id="MF_00159">
    <property type="entry name" value="IspG"/>
    <property type="match status" value="1"/>
</dbReference>
<dbReference type="InterPro" id="IPR011005">
    <property type="entry name" value="Dihydropteroate_synth-like_sf"/>
</dbReference>
<dbReference type="InterPro" id="IPR016425">
    <property type="entry name" value="IspG_bac"/>
</dbReference>
<dbReference type="InterPro" id="IPR004588">
    <property type="entry name" value="IspG_bac-typ"/>
</dbReference>
<dbReference type="InterPro" id="IPR045854">
    <property type="entry name" value="NO2/SO3_Rdtase_4Fe4S_sf"/>
</dbReference>
<dbReference type="NCBIfam" id="TIGR00612">
    <property type="entry name" value="ispG_gcpE"/>
    <property type="match status" value="1"/>
</dbReference>
<dbReference type="NCBIfam" id="NF001540">
    <property type="entry name" value="PRK00366.1"/>
    <property type="match status" value="1"/>
</dbReference>
<dbReference type="PANTHER" id="PTHR30454">
    <property type="entry name" value="4-HYDROXY-3-METHYLBUT-2-EN-1-YL DIPHOSPHATE SYNTHASE"/>
    <property type="match status" value="1"/>
</dbReference>
<dbReference type="PANTHER" id="PTHR30454:SF0">
    <property type="entry name" value="4-HYDROXY-3-METHYLBUT-2-EN-1-YL DIPHOSPHATE SYNTHASE (FERREDOXIN), CHLOROPLASTIC"/>
    <property type="match status" value="1"/>
</dbReference>
<dbReference type="Pfam" id="PF04551">
    <property type="entry name" value="GcpE"/>
    <property type="match status" value="1"/>
</dbReference>
<dbReference type="PIRSF" id="PIRSF004640">
    <property type="entry name" value="IspG"/>
    <property type="match status" value="1"/>
</dbReference>
<dbReference type="SUPFAM" id="SSF51395">
    <property type="entry name" value="FMN-linked oxidoreductases"/>
    <property type="match status" value="1"/>
</dbReference>
<dbReference type="SUPFAM" id="SSF56014">
    <property type="entry name" value="Nitrite and sulphite reductase 4Fe-4S domain-like"/>
    <property type="match status" value="1"/>
</dbReference>
<organism>
    <name type="scientific">Lawsonia intracellularis (strain PHE/MN1-00)</name>
    <dbReference type="NCBI Taxonomy" id="363253"/>
    <lineage>
        <taxon>Bacteria</taxon>
        <taxon>Pseudomonadati</taxon>
        <taxon>Thermodesulfobacteriota</taxon>
        <taxon>Desulfovibrionia</taxon>
        <taxon>Desulfovibrionales</taxon>
        <taxon>Desulfovibrionaceae</taxon>
        <taxon>Lawsonia</taxon>
    </lineage>
</organism>
<gene>
    <name evidence="1" type="primary">ispG</name>
    <name type="ordered locus">LI0024</name>
</gene>
<reference key="1">
    <citation type="submission" date="2005-11" db="EMBL/GenBank/DDBJ databases">
        <title>The complete genome sequence of Lawsonia intracellularis: the causative agent of proliferative enteropathy.</title>
        <authorList>
            <person name="Kaur K."/>
            <person name="Zhang Q."/>
            <person name="Beckler D."/>
            <person name="Munir S."/>
            <person name="Li L."/>
            <person name="Kinsley K."/>
            <person name="Herron L."/>
            <person name="Peterson A."/>
            <person name="May B."/>
            <person name="Singh S."/>
            <person name="Gebhart C."/>
            <person name="Kapur V."/>
        </authorList>
    </citation>
    <scope>NUCLEOTIDE SEQUENCE [LARGE SCALE GENOMIC DNA]</scope>
    <source>
        <strain>PHE/MN1-00</strain>
    </source>
</reference>
<sequence length="359" mass="38658">MNIRKKTRKIYIGNIAIGGDAPIIVQSMTNTDTRDIEATLKQINQLHAVGCEIVRLAVPDANAAKALKAIHDASPLPLIADIHFDYRLALTALESGIEGLRINPGNIGERKKVVTVVDAAKAHKASIRIGVNSGSVEKHLIDKFGGPVPEAMVESALNHIKILEDEKFYEIKVSIKSSSVLDTIAAYRMLSKSCDYPLHLGVTEAGSLIRGTVKSSVGLGILLSEGIGDTLRISLTEDPVEEVPVAWEILRALGLRRRGPEIIACPSCGRAEIDLIRLTKDVEACLVNEKTPLKIAVMGCVVNGPGEAKEADIGIAGGRDKGIIFAKGKVIRSVHGQDKLLNVFMEEVNKVIAEYNTTQ</sequence>
<name>ISPG_LAWIP</name>
<keyword id="KW-0004">4Fe-4S</keyword>
<keyword id="KW-0408">Iron</keyword>
<keyword id="KW-0411">Iron-sulfur</keyword>
<keyword id="KW-0414">Isoprene biosynthesis</keyword>
<keyword id="KW-0479">Metal-binding</keyword>
<keyword id="KW-0560">Oxidoreductase</keyword>
<keyword id="KW-1185">Reference proteome</keyword>
<accession>Q1MSE5</accession>